<proteinExistence type="inferred from homology"/>
<sequence length="158" mass="17042">VLIMELINNVAKAHGGYTVFAGVGERTREGNDLYHEMIESGVISLKDKTSKVALVYGQMNEPPGARARVALTGLTVAEYFRDQEGQDVLLFIDNIFRFTQAGSEVSALLGRIPSAVGYQPTLATDMGTMQERITTTSKGSITSVQAIYVPADDLTDPA</sequence>
<accession>Q07233</accession>
<comment type="function">
    <text>Mitochondrial membrane ATP synthase (F(1)F(0) ATP synthase or Complex V) produces ATP from ADP in the presence of a proton gradient across the membrane which is generated by electron transport complexes of the respiratory chain. F-type ATPases consist of two structural domains, F(1) - containing the extramembraneous catalytic core, and F(0) - containing the membrane proton channel, linked together by a central stalk and a peripheral stalk. During catalysis, ATP synthesis in the catalytic domain of F(1) is coupled via a rotary mechanism of the central stalk subunits to proton translocation. Subunits alpha and beta form the catalytic core in F(1). Rotation of the central stalk against the surrounding alpha(3)beta(3) subunits leads to hydrolysis of ATP in three separate catalytic sites on the beta subunits.</text>
</comment>
<comment type="catalytic activity">
    <reaction evidence="1">
        <text>ATP + H2O + 4 H(+)(in) = ADP + phosphate + 5 H(+)(out)</text>
        <dbReference type="Rhea" id="RHEA:57720"/>
        <dbReference type="ChEBI" id="CHEBI:15377"/>
        <dbReference type="ChEBI" id="CHEBI:15378"/>
        <dbReference type="ChEBI" id="CHEBI:30616"/>
        <dbReference type="ChEBI" id="CHEBI:43474"/>
        <dbReference type="ChEBI" id="CHEBI:456216"/>
        <dbReference type="EC" id="7.1.2.2"/>
    </reaction>
</comment>
<comment type="subunit">
    <text>F-type ATPases have 2 components, CF(1) - the catalytic core - and CF(0) - the membrane proton channel. CF(1) has five subunits: alpha(3), beta(3), gamma(1), delta(1), epsilon(1). CF(0) has three main subunits: a, b and c.</text>
</comment>
<comment type="subcellular location">
    <subcellularLocation>
        <location>Mitochondrion</location>
    </subcellularLocation>
    <subcellularLocation>
        <location>Mitochondrion inner membrane</location>
    </subcellularLocation>
    <text>Peripheral membrane protein.</text>
</comment>
<comment type="similarity">
    <text evidence="2">Belongs to the ATPase alpha/beta chains family.</text>
</comment>
<name>ATPB_SCHGA</name>
<dbReference type="EC" id="7.1.2.2"/>
<dbReference type="EMBL" id="Z15145">
    <property type="protein sequence ID" value="CAA78851.1"/>
    <property type="molecule type" value="Genomic_DNA"/>
</dbReference>
<dbReference type="PIR" id="S37645">
    <property type="entry name" value="S37645"/>
</dbReference>
<dbReference type="SMR" id="Q07233"/>
<dbReference type="GO" id="GO:0005743">
    <property type="term" value="C:mitochondrial inner membrane"/>
    <property type="evidence" value="ECO:0007669"/>
    <property type="project" value="UniProtKB-SubCell"/>
</dbReference>
<dbReference type="GO" id="GO:0045259">
    <property type="term" value="C:proton-transporting ATP synthase complex"/>
    <property type="evidence" value="ECO:0007669"/>
    <property type="project" value="UniProtKB-KW"/>
</dbReference>
<dbReference type="GO" id="GO:0005524">
    <property type="term" value="F:ATP binding"/>
    <property type="evidence" value="ECO:0007669"/>
    <property type="project" value="UniProtKB-KW"/>
</dbReference>
<dbReference type="GO" id="GO:0046933">
    <property type="term" value="F:proton-transporting ATP synthase activity, rotational mechanism"/>
    <property type="evidence" value="ECO:0007669"/>
    <property type="project" value="TreeGrafter"/>
</dbReference>
<dbReference type="GO" id="GO:0042776">
    <property type="term" value="P:proton motive force-driven mitochondrial ATP synthesis"/>
    <property type="evidence" value="ECO:0007669"/>
    <property type="project" value="TreeGrafter"/>
</dbReference>
<dbReference type="Gene3D" id="3.40.50.12240">
    <property type="match status" value="1"/>
</dbReference>
<dbReference type="InterPro" id="IPR050053">
    <property type="entry name" value="ATPase_alpha/beta_chains"/>
</dbReference>
<dbReference type="InterPro" id="IPR000194">
    <property type="entry name" value="ATPase_F1/V1/A1_a/bsu_nucl-bd"/>
</dbReference>
<dbReference type="InterPro" id="IPR027417">
    <property type="entry name" value="P-loop_NTPase"/>
</dbReference>
<dbReference type="PANTHER" id="PTHR15184">
    <property type="entry name" value="ATP SYNTHASE"/>
    <property type="match status" value="1"/>
</dbReference>
<dbReference type="PANTHER" id="PTHR15184:SF71">
    <property type="entry name" value="ATP SYNTHASE SUBUNIT BETA, MITOCHONDRIAL"/>
    <property type="match status" value="1"/>
</dbReference>
<dbReference type="Pfam" id="PF00006">
    <property type="entry name" value="ATP-synt_ab"/>
    <property type="match status" value="1"/>
</dbReference>
<dbReference type="SUPFAM" id="SSF52540">
    <property type="entry name" value="P-loop containing nucleoside triphosphate hydrolases"/>
    <property type="match status" value="1"/>
</dbReference>
<protein>
    <recommendedName>
        <fullName>ATP synthase subunit beta, mitochondrial</fullName>
        <ecNumber>7.1.2.2</ecNumber>
    </recommendedName>
</protein>
<reference key="1">
    <citation type="journal article" date="1993" name="Curr. Microbiol.">
        <title>Aspects of energy-yielding metabolism in the aphid, Schizaphis graminum, and its endosymbiont: detection of gene fragments potentially coding for the ATP synthase beta-subunit and glyceraldehyde-3-phosphate dehydrogenase.</title>
        <authorList>
            <person name="Clark M.A."/>
            <person name="Baumann P."/>
        </authorList>
    </citation>
    <scope>NUCLEOTIDE SEQUENCE [GENOMIC DNA]</scope>
</reference>
<organism>
    <name type="scientific">Schizaphis graminum</name>
    <name type="common">Green bug aphid</name>
    <dbReference type="NCBI Taxonomy" id="13262"/>
    <lineage>
        <taxon>Eukaryota</taxon>
        <taxon>Metazoa</taxon>
        <taxon>Ecdysozoa</taxon>
        <taxon>Arthropoda</taxon>
        <taxon>Hexapoda</taxon>
        <taxon>Insecta</taxon>
        <taxon>Pterygota</taxon>
        <taxon>Neoptera</taxon>
        <taxon>Paraneoptera</taxon>
        <taxon>Hemiptera</taxon>
        <taxon>Sternorrhyncha</taxon>
        <taxon>Aphidomorpha</taxon>
        <taxon>Aphidoidea</taxon>
        <taxon>Aphididae</taxon>
        <taxon>Aphidini</taxon>
        <taxon>Schizaphis</taxon>
    </lineage>
</organism>
<keyword id="KW-0066">ATP synthesis</keyword>
<keyword id="KW-0067">ATP-binding</keyword>
<keyword id="KW-0139">CF(1)</keyword>
<keyword id="KW-0375">Hydrogen ion transport</keyword>
<keyword id="KW-0406">Ion transport</keyword>
<keyword id="KW-0472">Membrane</keyword>
<keyword id="KW-0496">Mitochondrion</keyword>
<keyword id="KW-0999">Mitochondrion inner membrane</keyword>
<keyword id="KW-0547">Nucleotide-binding</keyword>
<keyword id="KW-1278">Translocase</keyword>
<keyword id="KW-0813">Transport</keyword>
<evidence type="ECO:0000255" key="1">
    <source>
        <dbReference type="PROSITE-ProRule" id="PRU10106"/>
    </source>
</evidence>
<evidence type="ECO:0000305" key="2"/>
<feature type="chain" id="PRO_0000144558" description="ATP synthase subunit beta, mitochondrial">
    <location>
        <begin position="1" status="less than"/>
        <end position="158" status="greater than"/>
    </location>
</feature>
<feature type="non-terminal residue">
    <location>
        <position position="1"/>
    </location>
</feature>
<feature type="non-terminal residue">
    <location>
        <position position="158"/>
    </location>
</feature>